<feature type="chain" id="PRO_0000129322" description="Large ribosomal subunit protein uL4c">
    <location>
        <begin position="1"/>
        <end position="200"/>
    </location>
</feature>
<feature type="region of interest" description="Disordered" evidence="2">
    <location>
        <begin position="45"/>
        <end position="71"/>
    </location>
</feature>
<feature type="compositionally biased region" description="Basic residues" evidence="2">
    <location>
        <begin position="51"/>
        <end position="68"/>
    </location>
</feature>
<evidence type="ECO:0000250" key="1"/>
<evidence type="ECO:0000256" key="2">
    <source>
        <dbReference type="SAM" id="MobiDB-lite"/>
    </source>
</evidence>
<evidence type="ECO:0000305" key="3"/>
<geneLocation type="chloroplast"/>
<keyword id="KW-0150">Chloroplast</keyword>
<keyword id="KW-0934">Plastid</keyword>
<keyword id="KW-1185">Reference proteome</keyword>
<keyword id="KW-0687">Ribonucleoprotein</keyword>
<keyword id="KW-0689">Ribosomal protein</keyword>
<keyword id="KW-0694">RNA-binding</keyword>
<keyword id="KW-0699">rRNA-binding</keyword>
<dbReference type="EMBL" id="AB002583">
    <property type="protein sequence ID" value="BAC76232.1"/>
    <property type="status" value="ALT_INIT"/>
    <property type="molecule type" value="Genomic_DNA"/>
</dbReference>
<dbReference type="RefSeq" id="NP_849070.1">
    <property type="nucleotide sequence ID" value="NC_004799.1"/>
</dbReference>
<dbReference type="SMR" id="Q85FW2"/>
<dbReference type="STRING" id="280699.Q85FW2"/>
<dbReference type="GeneID" id="844991"/>
<dbReference type="KEGG" id="cme:CymeCp138"/>
<dbReference type="eggNOG" id="KOG1624">
    <property type="taxonomic scope" value="Eukaryota"/>
</dbReference>
<dbReference type="HOGENOM" id="CLU_041575_5_2_1"/>
<dbReference type="Proteomes" id="UP000007014">
    <property type="component" value="Chloroplast"/>
</dbReference>
<dbReference type="GO" id="GO:0009507">
    <property type="term" value="C:chloroplast"/>
    <property type="evidence" value="ECO:0007669"/>
    <property type="project" value="UniProtKB-SubCell"/>
</dbReference>
<dbReference type="GO" id="GO:1990904">
    <property type="term" value="C:ribonucleoprotein complex"/>
    <property type="evidence" value="ECO:0007669"/>
    <property type="project" value="UniProtKB-KW"/>
</dbReference>
<dbReference type="GO" id="GO:0005840">
    <property type="term" value="C:ribosome"/>
    <property type="evidence" value="ECO:0007669"/>
    <property type="project" value="UniProtKB-KW"/>
</dbReference>
<dbReference type="GO" id="GO:0019843">
    <property type="term" value="F:rRNA binding"/>
    <property type="evidence" value="ECO:0007669"/>
    <property type="project" value="UniProtKB-UniRule"/>
</dbReference>
<dbReference type="GO" id="GO:0003735">
    <property type="term" value="F:structural constituent of ribosome"/>
    <property type="evidence" value="ECO:0007669"/>
    <property type="project" value="InterPro"/>
</dbReference>
<dbReference type="GO" id="GO:0006412">
    <property type="term" value="P:translation"/>
    <property type="evidence" value="ECO:0007669"/>
    <property type="project" value="UniProtKB-UniRule"/>
</dbReference>
<dbReference type="Gene3D" id="3.40.1370.10">
    <property type="match status" value="1"/>
</dbReference>
<dbReference type="HAMAP" id="MF_01328_B">
    <property type="entry name" value="Ribosomal_uL4_B"/>
    <property type="match status" value="1"/>
</dbReference>
<dbReference type="InterPro" id="IPR002136">
    <property type="entry name" value="Ribosomal_uL4"/>
</dbReference>
<dbReference type="InterPro" id="IPR013005">
    <property type="entry name" value="Ribosomal_uL4-like"/>
</dbReference>
<dbReference type="InterPro" id="IPR023574">
    <property type="entry name" value="Ribosomal_uL4_dom_sf"/>
</dbReference>
<dbReference type="NCBIfam" id="TIGR03953">
    <property type="entry name" value="rplD_bact"/>
    <property type="match status" value="1"/>
</dbReference>
<dbReference type="PANTHER" id="PTHR10746">
    <property type="entry name" value="50S RIBOSOMAL PROTEIN L4"/>
    <property type="match status" value="1"/>
</dbReference>
<dbReference type="PANTHER" id="PTHR10746:SF17">
    <property type="entry name" value="LARGE RIBOSOMAL SUBUNIT PROTEIN UL4C"/>
    <property type="match status" value="1"/>
</dbReference>
<dbReference type="Pfam" id="PF00573">
    <property type="entry name" value="Ribosomal_L4"/>
    <property type="match status" value="1"/>
</dbReference>
<dbReference type="SUPFAM" id="SSF52166">
    <property type="entry name" value="Ribosomal protein L4"/>
    <property type="match status" value="1"/>
</dbReference>
<protein>
    <recommendedName>
        <fullName evidence="3">Large ribosomal subunit protein uL4c</fullName>
    </recommendedName>
    <alternativeName>
        <fullName>50S ribosomal protein L4, chloroplastic</fullName>
    </alternativeName>
</protein>
<proteinExistence type="inferred from homology"/>
<accession>Q85FW2</accession>
<name>RK4_CYAM1</name>
<sequence>MRCQVRLEIFYELNEQEQHMKHLLHRALRTHMLSIRQWGAHTKTRAEIRGGGRKPWKQKGTGRARAGSRRSPLWRGGGVAFGPRGVAMECKLNRKESRKATKIAFMACSKKIQIVNPPILEKPSSRTISQMLPPLPSRPVLWILHEKNPSLWLSCRNIKTLQLIQAEHIYVKPLLWAKQIWISHEAIPILENQLNVKMME</sequence>
<reference key="1">
    <citation type="journal article" date="2003" name="DNA Res.">
        <title>Complete sequence and analysis of the plastid genome of the unicellular red alga Cyanidioschyzon merolae.</title>
        <authorList>
            <person name="Ohta N."/>
            <person name="Matsuzaki M."/>
            <person name="Misumi O."/>
            <person name="Miyagishima S.-Y."/>
            <person name="Nozaki H."/>
            <person name="Tanaka K."/>
            <person name="Shin-i T."/>
            <person name="Kohara Y."/>
            <person name="Kuroiwa T."/>
        </authorList>
    </citation>
    <scope>NUCLEOTIDE SEQUENCE [LARGE SCALE GENOMIC DNA]</scope>
    <source>
        <strain>NIES-3377 / 10D</strain>
    </source>
</reference>
<comment type="function">
    <text evidence="1">Probably binds the 23S rRNA.</text>
</comment>
<comment type="subunit">
    <text>Part of the 50S ribosomal subunit.</text>
</comment>
<comment type="subcellular location">
    <subcellularLocation>
        <location>Plastid</location>
        <location>Chloroplast</location>
    </subcellularLocation>
</comment>
<comment type="similarity">
    <text evidence="3">Belongs to the universal ribosomal protein uL4 family.</text>
</comment>
<comment type="sequence caution" evidence="3">
    <conflict type="erroneous initiation">
        <sequence resource="EMBL-CDS" id="BAC76232"/>
    </conflict>
</comment>
<gene>
    <name type="primary">rpl4</name>
</gene>
<organism>
    <name type="scientific">Cyanidioschyzon merolae (strain NIES-3377 / 10D)</name>
    <name type="common">Unicellular red alga</name>
    <dbReference type="NCBI Taxonomy" id="280699"/>
    <lineage>
        <taxon>Eukaryota</taxon>
        <taxon>Rhodophyta</taxon>
        <taxon>Bangiophyceae</taxon>
        <taxon>Cyanidiales</taxon>
        <taxon>Cyanidiaceae</taxon>
        <taxon>Cyanidioschyzon</taxon>
    </lineage>
</organism>